<gene>
    <name evidence="1" type="primary">aroK</name>
    <name type="ordered locus">Cag_1220</name>
</gene>
<proteinExistence type="inferred from homology"/>
<organism>
    <name type="scientific">Chlorobium chlorochromatii (strain CaD3)</name>
    <dbReference type="NCBI Taxonomy" id="340177"/>
    <lineage>
        <taxon>Bacteria</taxon>
        <taxon>Pseudomonadati</taxon>
        <taxon>Chlorobiota</taxon>
        <taxon>Chlorobiia</taxon>
        <taxon>Chlorobiales</taxon>
        <taxon>Chlorobiaceae</taxon>
        <taxon>Chlorobium/Pelodictyon group</taxon>
        <taxon>Chlorobium</taxon>
    </lineage>
</organism>
<accession>Q3AR93</accession>
<name>AROK_CHLCH</name>
<dbReference type="EC" id="2.7.1.71" evidence="1"/>
<dbReference type="EMBL" id="CP000108">
    <property type="protein sequence ID" value="ABB28482.1"/>
    <property type="molecule type" value="Genomic_DNA"/>
</dbReference>
<dbReference type="SMR" id="Q3AR93"/>
<dbReference type="STRING" id="340177.Cag_1220"/>
<dbReference type="KEGG" id="cch:Cag_1220"/>
<dbReference type="eggNOG" id="COG0703">
    <property type="taxonomic scope" value="Bacteria"/>
</dbReference>
<dbReference type="HOGENOM" id="CLU_057607_2_1_10"/>
<dbReference type="OrthoDB" id="9800332at2"/>
<dbReference type="UniPathway" id="UPA00053">
    <property type="reaction ID" value="UER00088"/>
</dbReference>
<dbReference type="GO" id="GO:0005829">
    <property type="term" value="C:cytosol"/>
    <property type="evidence" value="ECO:0007669"/>
    <property type="project" value="TreeGrafter"/>
</dbReference>
<dbReference type="GO" id="GO:0005524">
    <property type="term" value="F:ATP binding"/>
    <property type="evidence" value="ECO:0007669"/>
    <property type="project" value="UniProtKB-UniRule"/>
</dbReference>
<dbReference type="GO" id="GO:0000287">
    <property type="term" value="F:magnesium ion binding"/>
    <property type="evidence" value="ECO:0007669"/>
    <property type="project" value="UniProtKB-UniRule"/>
</dbReference>
<dbReference type="GO" id="GO:0004765">
    <property type="term" value="F:shikimate kinase activity"/>
    <property type="evidence" value="ECO:0007669"/>
    <property type="project" value="UniProtKB-UniRule"/>
</dbReference>
<dbReference type="GO" id="GO:0008652">
    <property type="term" value="P:amino acid biosynthetic process"/>
    <property type="evidence" value="ECO:0007669"/>
    <property type="project" value="UniProtKB-KW"/>
</dbReference>
<dbReference type="GO" id="GO:0009073">
    <property type="term" value="P:aromatic amino acid family biosynthetic process"/>
    <property type="evidence" value="ECO:0007669"/>
    <property type="project" value="UniProtKB-KW"/>
</dbReference>
<dbReference type="GO" id="GO:0009423">
    <property type="term" value="P:chorismate biosynthetic process"/>
    <property type="evidence" value="ECO:0007669"/>
    <property type="project" value="UniProtKB-UniRule"/>
</dbReference>
<dbReference type="CDD" id="cd00464">
    <property type="entry name" value="SK"/>
    <property type="match status" value="1"/>
</dbReference>
<dbReference type="Gene3D" id="3.40.50.300">
    <property type="entry name" value="P-loop containing nucleotide triphosphate hydrolases"/>
    <property type="match status" value="1"/>
</dbReference>
<dbReference type="HAMAP" id="MF_00109">
    <property type="entry name" value="Shikimate_kinase"/>
    <property type="match status" value="1"/>
</dbReference>
<dbReference type="InterPro" id="IPR027417">
    <property type="entry name" value="P-loop_NTPase"/>
</dbReference>
<dbReference type="InterPro" id="IPR031322">
    <property type="entry name" value="Shikimate/glucono_kinase"/>
</dbReference>
<dbReference type="InterPro" id="IPR000623">
    <property type="entry name" value="Shikimate_kinase/TSH1"/>
</dbReference>
<dbReference type="InterPro" id="IPR023000">
    <property type="entry name" value="Shikimate_kinase_CS"/>
</dbReference>
<dbReference type="PANTHER" id="PTHR21087">
    <property type="entry name" value="SHIKIMATE KINASE"/>
    <property type="match status" value="1"/>
</dbReference>
<dbReference type="PANTHER" id="PTHR21087:SF16">
    <property type="entry name" value="SHIKIMATE KINASE 1, CHLOROPLASTIC"/>
    <property type="match status" value="1"/>
</dbReference>
<dbReference type="Pfam" id="PF01202">
    <property type="entry name" value="SKI"/>
    <property type="match status" value="1"/>
</dbReference>
<dbReference type="PRINTS" id="PR01100">
    <property type="entry name" value="SHIKIMTKNASE"/>
</dbReference>
<dbReference type="SUPFAM" id="SSF52540">
    <property type="entry name" value="P-loop containing nucleoside triphosphate hydrolases"/>
    <property type="match status" value="1"/>
</dbReference>
<dbReference type="PROSITE" id="PS01128">
    <property type="entry name" value="SHIKIMATE_KINASE"/>
    <property type="match status" value="1"/>
</dbReference>
<sequence length="190" mass="21288">MQKEPSLIFLTGFSGSGKSTIGPLLANSLGYEFVDLDALIERECGKSINQIFAEAGEAAFRQHEEQTLETLLMRRKTVVSLGGGVLEQPRAFELVRQAGTVVYLKSPVKTLARRLSNKTDRPLLKGEQGEKLSQEEIEQKIAELLARREPRYECADITVETDAKRIGSTVEELTRKIERYMRTLALSSEE</sequence>
<comment type="function">
    <text evidence="1">Catalyzes the specific phosphorylation of the 3-hydroxyl group of shikimic acid using ATP as a cosubstrate.</text>
</comment>
<comment type="catalytic activity">
    <reaction evidence="1">
        <text>shikimate + ATP = 3-phosphoshikimate + ADP + H(+)</text>
        <dbReference type="Rhea" id="RHEA:13121"/>
        <dbReference type="ChEBI" id="CHEBI:15378"/>
        <dbReference type="ChEBI" id="CHEBI:30616"/>
        <dbReference type="ChEBI" id="CHEBI:36208"/>
        <dbReference type="ChEBI" id="CHEBI:145989"/>
        <dbReference type="ChEBI" id="CHEBI:456216"/>
        <dbReference type="EC" id="2.7.1.71"/>
    </reaction>
</comment>
<comment type="cofactor">
    <cofactor evidence="1">
        <name>Mg(2+)</name>
        <dbReference type="ChEBI" id="CHEBI:18420"/>
    </cofactor>
    <text evidence="1">Binds 1 Mg(2+) ion per subunit.</text>
</comment>
<comment type="pathway">
    <text evidence="1">Metabolic intermediate biosynthesis; chorismate biosynthesis; chorismate from D-erythrose 4-phosphate and phosphoenolpyruvate: step 5/7.</text>
</comment>
<comment type="subunit">
    <text evidence="1">Monomer.</text>
</comment>
<comment type="subcellular location">
    <subcellularLocation>
        <location evidence="1">Cytoplasm</location>
    </subcellularLocation>
</comment>
<comment type="similarity">
    <text evidence="1">Belongs to the shikimate kinase family.</text>
</comment>
<protein>
    <recommendedName>
        <fullName evidence="1">Shikimate kinase</fullName>
        <shortName evidence="1">SK</shortName>
        <ecNumber evidence="1">2.7.1.71</ecNumber>
    </recommendedName>
</protein>
<feature type="chain" id="PRO_0000237863" description="Shikimate kinase">
    <location>
        <begin position="1"/>
        <end position="190"/>
    </location>
</feature>
<feature type="binding site" evidence="1">
    <location>
        <begin position="15"/>
        <end position="20"/>
    </location>
    <ligand>
        <name>ATP</name>
        <dbReference type="ChEBI" id="CHEBI:30616"/>
    </ligand>
</feature>
<feature type="binding site" evidence="1">
    <location>
        <position position="19"/>
    </location>
    <ligand>
        <name>Mg(2+)</name>
        <dbReference type="ChEBI" id="CHEBI:18420"/>
    </ligand>
</feature>
<feature type="binding site" evidence="1">
    <location>
        <position position="37"/>
    </location>
    <ligand>
        <name>substrate</name>
    </ligand>
</feature>
<feature type="binding site" evidence="1">
    <location>
        <position position="61"/>
    </location>
    <ligand>
        <name>substrate</name>
    </ligand>
</feature>
<feature type="binding site" evidence="1">
    <location>
        <position position="83"/>
    </location>
    <ligand>
        <name>substrate</name>
    </ligand>
</feature>
<feature type="binding site" evidence="1">
    <location>
        <position position="121"/>
    </location>
    <ligand>
        <name>ATP</name>
        <dbReference type="ChEBI" id="CHEBI:30616"/>
    </ligand>
</feature>
<feature type="binding site" evidence="1">
    <location>
        <position position="148"/>
    </location>
    <ligand>
        <name>substrate</name>
    </ligand>
</feature>
<evidence type="ECO:0000255" key="1">
    <source>
        <dbReference type="HAMAP-Rule" id="MF_00109"/>
    </source>
</evidence>
<keyword id="KW-0028">Amino-acid biosynthesis</keyword>
<keyword id="KW-0057">Aromatic amino acid biosynthesis</keyword>
<keyword id="KW-0067">ATP-binding</keyword>
<keyword id="KW-0963">Cytoplasm</keyword>
<keyword id="KW-0418">Kinase</keyword>
<keyword id="KW-0460">Magnesium</keyword>
<keyword id="KW-0479">Metal-binding</keyword>
<keyword id="KW-0547">Nucleotide-binding</keyword>
<keyword id="KW-0808">Transferase</keyword>
<reference key="1">
    <citation type="submission" date="2005-08" db="EMBL/GenBank/DDBJ databases">
        <title>Complete sequence of Chlorobium chlorochromatii CaD3.</title>
        <authorList>
            <consortium name="US DOE Joint Genome Institute"/>
            <person name="Copeland A."/>
            <person name="Lucas S."/>
            <person name="Lapidus A."/>
            <person name="Barry K."/>
            <person name="Detter J.C."/>
            <person name="Glavina T."/>
            <person name="Hammon N."/>
            <person name="Israni S."/>
            <person name="Pitluck S."/>
            <person name="Bryant D."/>
            <person name="Schmutz J."/>
            <person name="Larimer F."/>
            <person name="Land M."/>
            <person name="Kyrpides N."/>
            <person name="Ivanova N."/>
            <person name="Richardson P."/>
        </authorList>
    </citation>
    <scope>NUCLEOTIDE SEQUENCE [LARGE SCALE GENOMIC DNA]</scope>
    <source>
        <strain>CaD3</strain>
    </source>
</reference>